<gene>
    <name evidence="1" type="primary">fabV</name>
    <name type="ordered locus">IL1051</name>
</gene>
<proteinExistence type="inferred from homology"/>
<name>FABV_IDILO</name>
<feature type="chain" id="PRO_0000220043" description="Enoyl-[acyl-carrier-protein] reductase [NADH]">
    <location>
        <begin position="1"/>
        <end position="392"/>
    </location>
</feature>
<feature type="active site" description="Proton donor" evidence="1">
    <location>
        <position position="235"/>
    </location>
</feature>
<feature type="binding site" evidence="1">
    <location>
        <begin position="48"/>
        <end position="53"/>
    </location>
    <ligand>
        <name>NAD(+)</name>
        <dbReference type="ChEBI" id="CHEBI:57540"/>
    </ligand>
</feature>
<feature type="binding site" evidence="1">
    <location>
        <begin position="74"/>
        <end position="75"/>
    </location>
    <ligand>
        <name>NAD(+)</name>
        <dbReference type="ChEBI" id="CHEBI:57540"/>
    </ligand>
</feature>
<feature type="binding site" evidence="1">
    <location>
        <begin position="111"/>
        <end position="112"/>
    </location>
    <ligand>
        <name>NAD(+)</name>
        <dbReference type="ChEBI" id="CHEBI:57540"/>
    </ligand>
</feature>
<feature type="binding site" evidence="1">
    <location>
        <begin position="139"/>
        <end position="140"/>
    </location>
    <ligand>
        <name>NAD(+)</name>
        <dbReference type="ChEBI" id="CHEBI:57540"/>
    </ligand>
</feature>
<feature type="binding site" evidence="1">
    <location>
        <position position="225"/>
    </location>
    <ligand>
        <name>substrate</name>
    </ligand>
</feature>
<feature type="binding site" evidence="1">
    <location>
        <position position="244"/>
    </location>
    <ligand>
        <name>NAD(+)</name>
        <dbReference type="ChEBI" id="CHEBI:57540"/>
    </ligand>
</feature>
<feature type="binding site" evidence="1">
    <location>
        <begin position="273"/>
        <end position="275"/>
    </location>
    <ligand>
        <name>NAD(+)</name>
        <dbReference type="ChEBI" id="CHEBI:57540"/>
    </ligand>
</feature>
<feature type="site" description="Plays an important role in discriminating NADH against NADPH" evidence="1">
    <location>
        <position position="75"/>
    </location>
</feature>
<evidence type="ECO:0000255" key="1">
    <source>
        <dbReference type="HAMAP-Rule" id="MF_01838"/>
    </source>
</evidence>
<protein>
    <recommendedName>
        <fullName evidence="1">Enoyl-[acyl-carrier-protein] reductase [NADH]</fullName>
        <shortName evidence="1">ENR</shortName>
        <ecNumber evidence="1">1.3.1.9</ecNumber>
    </recommendedName>
</protein>
<sequence>MIIKPKIRGFICTNSHPVGCAENVKRQIEFVRNKPAITNGPKNVLVIGCSTGYGLASRITAAFGSEAHTLGVCFEKEPTEKKTATAGWYNTAAFHQEANKAGLAFHSINGDAFSDEIKQESIDYIKQNMGKIDLVVYSLASPKRKDPDSGEVYSSVLKPIGKQYTTKTYNTDKDQVHEVTLDPATDEDIANTVKVMGGEDWERWVKALHNAGVLAENCQTTAYTYIGKKLTLPIYGHATIGRAKEDLDRAASELVAECDDLNLKAYVSSLKALVTQASSAIPVMPLYISLIYKVMKEEGTHEGCIEQIYRLFTEGLYNSNPELDEAGRLHMDGYETNDKTQAKIEALWEQVTQDNFHQLADYEGYHQEFLHLFGFGFDNVDYDADIDPKVNW</sequence>
<keyword id="KW-0275">Fatty acid biosynthesis</keyword>
<keyword id="KW-0276">Fatty acid metabolism</keyword>
<keyword id="KW-0444">Lipid biosynthesis</keyword>
<keyword id="KW-0443">Lipid metabolism</keyword>
<keyword id="KW-0520">NAD</keyword>
<keyword id="KW-0560">Oxidoreductase</keyword>
<keyword id="KW-1185">Reference proteome</keyword>
<organism>
    <name type="scientific">Idiomarina loihiensis (strain ATCC BAA-735 / DSM 15497 / L2-TR)</name>
    <dbReference type="NCBI Taxonomy" id="283942"/>
    <lineage>
        <taxon>Bacteria</taxon>
        <taxon>Pseudomonadati</taxon>
        <taxon>Pseudomonadota</taxon>
        <taxon>Gammaproteobacteria</taxon>
        <taxon>Alteromonadales</taxon>
        <taxon>Idiomarinaceae</taxon>
        <taxon>Idiomarina</taxon>
    </lineage>
</organism>
<reference key="1">
    <citation type="journal article" date="2004" name="Proc. Natl. Acad. Sci. U.S.A.">
        <title>Genome sequence of the deep-sea gamma-proteobacterium Idiomarina loihiensis reveals amino acid fermentation as a source of carbon and energy.</title>
        <authorList>
            <person name="Hou S."/>
            <person name="Saw J.H."/>
            <person name="Lee K.S."/>
            <person name="Freitas T.A."/>
            <person name="Belisle C."/>
            <person name="Kawarabayasi Y."/>
            <person name="Donachie S.P."/>
            <person name="Pikina A."/>
            <person name="Galperin M.Y."/>
            <person name="Koonin E.V."/>
            <person name="Makarova K.S."/>
            <person name="Omelchenko M.V."/>
            <person name="Sorokin A."/>
            <person name="Wolf Y.I."/>
            <person name="Li Q.X."/>
            <person name="Keum Y.S."/>
            <person name="Campbell S."/>
            <person name="Denery J."/>
            <person name="Aizawa S."/>
            <person name="Shibata S."/>
            <person name="Malahoff A."/>
            <person name="Alam M."/>
        </authorList>
    </citation>
    <scope>NUCLEOTIDE SEQUENCE [LARGE SCALE GENOMIC DNA]</scope>
    <source>
        <strain>ATCC BAA-735 / DSM 15497 / L2-TR</strain>
    </source>
</reference>
<accession>Q5QYR6</accession>
<comment type="function">
    <text evidence="1">Involved in the final reduction of the elongation cycle of fatty acid synthesis (FAS II). Catalyzes the reduction of a carbon-carbon double bond in an enoyl moiety that is covalently linked to an acyl carrier protein (ACP).</text>
</comment>
<comment type="catalytic activity">
    <reaction evidence="1">
        <text>a 2,3-saturated acyl-[ACP] + NAD(+) = a (2E)-enoyl-[ACP] + NADH + H(+)</text>
        <dbReference type="Rhea" id="RHEA:10240"/>
        <dbReference type="Rhea" id="RHEA-COMP:9925"/>
        <dbReference type="Rhea" id="RHEA-COMP:9926"/>
        <dbReference type="ChEBI" id="CHEBI:15378"/>
        <dbReference type="ChEBI" id="CHEBI:57540"/>
        <dbReference type="ChEBI" id="CHEBI:57945"/>
        <dbReference type="ChEBI" id="CHEBI:78784"/>
        <dbReference type="ChEBI" id="CHEBI:78785"/>
        <dbReference type="EC" id="1.3.1.9"/>
    </reaction>
</comment>
<comment type="pathway">
    <text evidence="1">Lipid metabolism; fatty acid biosynthesis.</text>
</comment>
<comment type="subunit">
    <text evidence="1">Monomer.</text>
</comment>
<comment type="similarity">
    <text evidence="1">Belongs to the TER reductase family.</text>
</comment>
<dbReference type="EC" id="1.3.1.9" evidence="1"/>
<dbReference type="EMBL" id="AE017340">
    <property type="protein sequence ID" value="AAV81891.1"/>
    <property type="molecule type" value="Genomic_DNA"/>
</dbReference>
<dbReference type="RefSeq" id="WP_011234302.1">
    <property type="nucleotide sequence ID" value="NC_006512.1"/>
</dbReference>
<dbReference type="SMR" id="Q5QYR6"/>
<dbReference type="STRING" id="283942.IL1051"/>
<dbReference type="GeneID" id="41336217"/>
<dbReference type="KEGG" id="ilo:IL1051"/>
<dbReference type="eggNOG" id="COG3007">
    <property type="taxonomic scope" value="Bacteria"/>
</dbReference>
<dbReference type="HOGENOM" id="CLU_057698_1_0_6"/>
<dbReference type="OrthoDB" id="9802260at2"/>
<dbReference type="UniPathway" id="UPA00094"/>
<dbReference type="Proteomes" id="UP000001171">
    <property type="component" value="Chromosome"/>
</dbReference>
<dbReference type="GO" id="GO:0004318">
    <property type="term" value="F:enoyl-[acyl-carrier-protein] reductase (NADH) activity"/>
    <property type="evidence" value="ECO:0007669"/>
    <property type="project" value="UniProtKB-UniRule"/>
</dbReference>
<dbReference type="GO" id="GO:0051287">
    <property type="term" value="F:NAD binding"/>
    <property type="evidence" value="ECO:0007669"/>
    <property type="project" value="UniProtKB-UniRule"/>
</dbReference>
<dbReference type="GO" id="GO:0050343">
    <property type="term" value="F:trans-2-enoyl-CoA reductase (NADH) activity"/>
    <property type="evidence" value="ECO:0007669"/>
    <property type="project" value="TreeGrafter"/>
</dbReference>
<dbReference type="GO" id="GO:0006633">
    <property type="term" value="P:fatty acid biosynthetic process"/>
    <property type="evidence" value="ECO:0007669"/>
    <property type="project" value="UniProtKB-UniRule"/>
</dbReference>
<dbReference type="FunFam" id="3.40.50.720:FF:000221">
    <property type="entry name" value="Enoyl-[acyl-carrier-protein] reductase [NADH]"/>
    <property type="match status" value="1"/>
</dbReference>
<dbReference type="Gene3D" id="3.40.50.720">
    <property type="entry name" value="NAD(P)-binding Rossmann-like Domain"/>
    <property type="match status" value="1"/>
</dbReference>
<dbReference type="HAMAP" id="MF_01838">
    <property type="entry name" value="FabV_reductase"/>
    <property type="match status" value="1"/>
</dbReference>
<dbReference type="InterPro" id="IPR024906">
    <property type="entry name" value="Eno_Rdtase_FAD-bd_dom"/>
</dbReference>
<dbReference type="InterPro" id="IPR024910">
    <property type="entry name" value="Enoyl-CoA_Rdtase_cat_dom"/>
</dbReference>
<dbReference type="InterPro" id="IPR050048">
    <property type="entry name" value="FabV-like_NADH_b"/>
</dbReference>
<dbReference type="InterPro" id="IPR010758">
    <property type="entry name" value="Trans-2-enoyl-CoA_reductase"/>
</dbReference>
<dbReference type="NCBIfam" id="NF043048">
    <property type="entry name" value="EnoyACPredFabV"/>
    <property type="match status" value="1"/>
</dbReference>
<dbReference type="NCBIfam" id="NF010177">
    <property type="entry name" value="PRK13656.1"/>
    <property type="match status" value="1"/>
</dbReference>
<dbReference type="PANTHER" id="PTHR37480">
    <property type="entry name" value="ENOYL-[ACYL-CARRIER-PROTEIN] REDUCTASE [NADH]"/>
    <property type="match status" value="1"/>
</dbReference>
<dbReference type="PANTHER" id="PTHR37480:SF1">
    <property type="entry name" value="ENOYL-[ACYL-CARRIER-PROTEIN] REDUCTASE [NADH]"/>
    <property type="match status" value="1"/>
</dbReference>
<dbReference type="Pfam" id="PF07055">
    <property type="entry name" value="Eno-Rase_FAD_bd"/>
    <property type="match status" value="1"/>
</dbReference>
<dbReference type="Pfam" id="PF12242">
    <property type="entry name" value="Eno-Rase_NADH_b"/>
    <property type="match status" value="1"/>
</dbReference>
<dbReference type="Pfam" id="PF12241">
    <property type="entry name" value="Enoyl_reductase"/>
    <property type="match status" value="1"/>
</dbReference>